<evidence type="ECO:0000255" key="1">
    <source>
        <dbReference type="HAMAP-Rule" id="MF_01351"/>
    </source>
</evidence>
<evidence type="ECO:0000256" key="2">
    <source>
        <dbReference type="SAM" id="MobiDB-lite"/>
    </source>
</evidence>
<name>NUOI_AERS4</name>
<comment type="function">
    <text evidence="1">NDH-1 shuttles electrons from NADH, via FMN and iron-sulfur (Fe-S) centers, to quinones in the respiratory chain. The immediate electron acceptor for the enzyme in this species is believed to be ubiquinone. Couples the redox reaction to proton translocation (for every two electrons transferred, four hydrogen ions are translocated across the cytoplasmic membrane), and thus conserves the redox energy in a proton gradient.</text>
</comment>
<comment type="catalytic activity">
    <reaction evidence="1">
        <text>a quinone + NADH + 5 H(+)(in) = a quinol + NAD(+) + 4 H(+)(out)</text>
        <dbReference type="Rhea" id="RHEA:57888"/>
        <dbReference type="ChEBI" id="CHEBI:15378"/>
        <dbReference type="ChEBI" id="CHEBI:24646"/>
        <dbReference type="ChEBI" id="CHEBI:57540"/>
        <dbReference type="ChEBI" id="CHEBI:57945"/>
        <dbReference type="ChEBI" id="CHEBI:132124"/>
    </reaction>
</comment>
<comment type="cofactor">
    <cofactor evidence="1">
        <name>[4Fe-4S] cluster</name>
        <dbReference type="ChEBI" id="CHEBI:49883"/>
    </cofactor>
    <text evidence="1">Binds 2 [4Fe-4S] clusters per subunit.</text>
</comment>
<comment type="subunit">
    <text evidence="1">NDH-1 is composed of 14 different subunits. Subunits NuoA, H, J, K, L, M, N constitute the membrane sector of the complex.</text>
</comment>
<comment type="subcellular location">
    <subcellularLocation>
        <location evidence="1">Cell inner membrane</location>
        <topology evidence="1">Peripheral membrane protein</topology>
    </subcellularLocation>
</comment>
<comment type="similarity">
    <text evidence="1">Belongs to the complex I 23 kDa subunit family.</text>
</comment>
<sequence length="180" mass="20469">MKIINIIKGVGTQLRSLGMVFSHAWRPRETLSYPDESIYSPPRYRGRIVLTRDPDGDERCVACNLCAVACPVGCISLQKAERDDGRWYPEFFRINFSRCIFCGLCEEACPTTAIQLTPDFEMGEYRRQDLVYEKEDLLISGPGKYPDYNFYRMSGMAIDGKPKGDAEHEAKPIDVKSLLP</sequence>
<proteinExistence type="inferred from homology"/>
<reference key="1">
    <citation type="journal article" date="2008" name="BMC Genomics">
        <title>The genome of Aeromonas salmonicida subsp. salmonicida A449: insights into the evolution of a fish pathogen.</title>
        <authorList>
            <person name="Reith M.E."/>
            <person name="Singh R.K."/>
            <person name="Curtis B."/>
            <person name="Boyd J.M."/>
            <person name="Bouevitch A."/>
            <person name="Kimball J."/>
            <person name="Munholland J."/>
            <person name="Murphy C."/>
            <person name="Sarty D."/>
            <person name="Williams J."/>
            <person name="Nash J.H."/>
            <person name="Johnson S.C."/>
            <person name="Brown L.L."/>
        </authorList>
    </citation>
    <scope>NUCLEOTIDE SEQUENCE [LARGE SCALE GENOMIC DNA]</scope>
    <source>
        <strain>A449</strain>
    </source>
</reference>
<feature type="chain" id="PRO_0000298477" description="NADH-quinone oxidoreductase subunit I">
    <location>
        <begin position="1"/>
        <end position="180"/>
    </location>
</feature>
<feature type="domain" description="4Fe-4S ferredoxin-type 1" evidence="1">
    <location>
        <begin position="48"/>
        <end position="80"/>
    </location>
</feature>
<feature type="domain" description="4Fe-4S ferredoxin-type 2" evidence="1">
    <location>
        <begin position="90"/>
        <end position="119"/>
    </location>
</feature>
<feature type="region of interest" description="Disordered" evidence="2">
    <location>
        <begin position="161"/>
        <end position="180"/>
    </location>
</feature>
<feature type="compositionally biased region" description="Basic and acidic residues" evidence="2">
    <location>
        <begin position="161"/>
        <end position="174"/>
    </location>
</feature>
<feature type="binding site" evidence="1">
    <location>
        <position position="60"/>
    </location>
    <ligand>
        <name>[4Fe-4S] cluster</name>
        <dbReference type="ChEBI" id="CHEBI:49883"/>
        <label>1</label>
    </ligand>
</feature>
<feature type="binding site" evidence="1">
    <location>
        <position position="63"/>
    </location>
    <ligand>
        <name>[4Fe-4S] cluster</name>
        <dbReference type="ChEBI" id="CHEBI:49883"/>
        <label>1</label>
    </ligand>
</feature>
<feature type="binding site" evidence="1">
    <location>
        <position position="66"/>
    </location>
    <ligand>
        <name>[4Fe-4S] cluster</name>
        <dbReference type="ChEBI" id="CHEBI:49883"/>
        <label>1</label>
    </ligand>
</feature>
<feature type="binding site" evidence="1">
    <location>
        <position position="70"/>
    </location>
    <ligand>
        <name>[4Fe-4S] cluster</name>
        <dbReference type="ChEBI" id="CHEBI:49883"/>
        <label>2</label>
    </ligand>
</feature>
<feature type="binding site" evidence="1">
    <location>
        <position position="99"/>
    </location>
    <ligand>
        <name>[4Fe-4S] cluster</name>
        <dbReference type="ChEBI" id="CHEBI:49883"/>
        <label>2</label>
    </ligand>
</feature>
<feature type="binding site" evidence="1">
    <location>
        <position position="102"/>
    </location>
    <ligand>
        <name>[4Fe-4S] cluster</name>
        <dbReference type="ChEBI" id="CHEBI:49883"/>
        <label>2</label>
    </ligand>
</feature>
<feature type="binding site" evidence="1">
    <location>
        <position position="105"/>
    </location>
    <ligand>
        <name>[4Fe-4S] cluster</name>
        <dbReference type="ChEBI" id="CHEBI:49883"/>
        <label>2</label>
    </ligand>
</feature>
<feature type="binding site" evidence="1">
    <location>
        <position position="109"/>
    </location>
    <ligand>
        <name>[4Fe-4S] cluster</name>
        <dbReference type="ChEBI" id="CHEBI:49883"/>
        <label>1</label>
    </ligand>
</feature>
<protein>
    <recommendedName>
        <fullName evidence="1">NADH-quinone oxidoreductase subunit I</fullName>
        <ecNumber evidence="1">7.1.1.-</ecNumber>
    </recommendedName>
    <alternativeName>
        <fullName evidence="1">NADH dehydrogenase I subunit I</fullName>
    </alternativeName>
    <alternativeName>
        <fullName evidence="1">NDH-1 subunit I</fullName>
    </alternativeName>
</protein>
<keyword id="KW-0004">4Fe-4S</keyword>
<keyword id="KW-0997">Cell inner membrane</keyword>
<keyword id="KW-1003">Cell membrane</keyword>
<keyword id="KW-0408">Iron</keyword>
<keyword id="KW-0411">Iron-sulfur</keyword>
<keyword id="KW-0472">Membrane</keyword>
<keyword id="KW-0479">Metal-binding</keyword>
<keyword id="KW-0520">NAD</keyword>
<keyword id="KW-0874">Quinone</keyword>
<keyword id="KW-0677">Repeat</keyword>
<keyword id="KW-1278">Translocase</keyword>
<keyword id="KW-0830">Ubiquinone</keyword>
<accession>A4SLN7</accession>
<organism>
    <name type="scientific">Aeromonas salmonicida (strain A449)</name>
    <dbReference type="NCBI Taxonomy" id="382245"/>
    <lineage>
        <taxon>Bacteria</taxon>
        <taxon>Pseudomonadati</taxon>
        <taxon>Pseudomonadota</taxon>
        <taxon>Gammaproteobacteria</taxon>
        <taxon>Aeromonadales</taxon>
        <taxon>Aeromonadaceae</taxon>
        <taxon>Aeromonas</taxon>
    </lineage>
</organism>
<dbReference type="EC" id="7.1.1.-" evidence="1"/>
<dbReference type="EMBL" id="CP000644">
    <property type="protein sequence ID" value="ABO89809.1"/>
    <property type="molecule type" value="Genomic_DNA"/>
</dbReference>
<dbReference type="RefSeq" id="WP_005314897.1">
    <property type="nucleotide sequence ID" value="NC_009348.1"/>
</dbReference>
<dbReference type="SMR" id="A4SLN7"/>
<dbReference type="STRING" id="29491.GCA_000820065_02199"/>
<dbReference type="KEGG" id="asa:ASA_1729"/>
<dbReference type="PATRIC" id="fig|382245.13.peg.1716"/>
<dbReference type="eggNOG" id="COG1143">
    <property type="taxonomic scope" value="Bacteria"/>
</dbReference>
<dbReference type="HOGENOM" id="CLU_067218_4_3_6"/>
<dbReference type="Proteomes" id="UP000000225">
    <property type="component" value="Chromosome"/>
</dbReference>
<dbReference type="GO" id="GO:0005886">
    <property type="term" value="C:plasma membrane"/>
    <property type="evidence" value="ECO:0007669"/>
    <property type="project" value="UniProtKB-SubCell"/>
</dbReference>
<dbReference type="GO" id="GO:0051539">
    <property type="term" value="F:4 iron, 4 sulfur cluster binding"/>
    <property type="evidence" value="ECO:0007669"/>
    <property type="project" value="UniProtKB-KW"/>
</dbReference>
<dbReference type="GO" id="GO:0005506">
    <property type="term" value="F:iron ion binding"/>
    <property type="evidence" value="ECO:0007669"/>
    <property type="project" value="UniProtKB-UniRule"/>
</dbReference>
<dbReference type="GO" id="GO:0050136">
    <property type="term" value="F:NADH:ubiquinone reductase (non-electrogenic) activity"/>
    <property type="evidence" value="ECO:0007669"/>
    <property type="project" value="UniProtKB-UniRule"/>
</dbReference>
<dbReference type="GO" id="GO:0048038">
    <property type="term" value="F:quinone binding"/>
    <property type="evidence" value="ECO:0007669"/>
    <property type="project" value="UniProtKB-KW"/>
</dbReference>
<dbReference type="GO" id="GO:0009060">
    <property type="term" value="P:aerobic respiration"/>
    <property type="evidence" value="ECO:0007669"/>
    <property type="project" value="TreeGrafter"/>
</dbReference>
<dbReference type="FunFam" id="3.30.70.3270:FF:000002">
    <property type="entry name" value="NADH-quinone oxidoreductase subunit I"/>
    <property type="match status" value="1"/>
</dbReference>
<dbReference type="Gene3D" id="3.30.70.3270">
    <property type="match status" value="1"/>
</dbReference>
<dbReference type="HAMAP" id="MF_01351">
    <property type="entry name" value="NDH1_NuoI"/>
    <property type="match status" value="1"/>
</dbReference>
<dbReference type="InterPro" id="IPR017896">
    <property type="entry name" value="4Fe4S_Fe-S-bd"/>
</dbReference>
<dbReference type="InterPro" id="IPR017900">
    <property type="entry name" value="4Fe4S_Fe_S_CS"/>
</dbReference>
<dbReference type="InterPro" id="IPR010226">
    <property type="entry name" value="NADH_quinone_OxRdtase_chainI"/>
</dbReference>
<dbReference type="NCBIfam" id="TIGR01971">
    <property type="entry name" value="NuoI"/>
    <property type="match status" value="1"/>
</dbReference>
<dbReference type="NCBIfam" id="NF004536">
    <property type="entry name" value="PRK05888.1-1"/>
    <property type="match status" value="1"/>
</dbReference>
<dbReference type="PANTHER" id="PTHR10849:SF20">
    <property type="entry name" value="NADH DEHYDROGENASE [UBIQUINONE] IRON-SULFUR PROTEIN 8, MITOCHONDRIAL"/>
    <property type="match status" value="1"/>
</dbReference>
<dbReference type="PANTHER" id="PTHR10849">
    <property type="entry name" value="NADH DEHYDROGENASE UBIQUINONE IRON-SULFUR PROTEIN 8, MITOCHONDRIAL"/>
    <property type="match status" value="1"/>
</dbReference>
<dbReference type="Pfam" id="PF12838">
    <property type="entry name" value="Fer4_7"/>
    <property type="match status" value="1"/>
</dbReference>
<dbReference type="SUPFAM" id="SSF54862">
    <property type="entry name" value="4Fe-4S ferredoxins"/>
    <property type="match status" value="1"/>
</dbReference>
<dbReference type="PROSITE" id="PS00198">
    <property type="entry name" value="4FE4S_FER_1"/>
    <property type="match status" value="2"/>
</dbReference>
<dbReference type="PROSITE" id="PS51379">
    <property type="entry name" value="4FE4S_FER_2"/>
    <property type="match status" value="2"/>
</dbReference>
<gene>
    <name evidence="1" type="primary">nuoI</name>
    <name type="ordered locus">ASA_1729</name>
</gene>